<feature type="chain" id="PRO_0000233526" description="Small ribosomal subunit protein uS17">
    <location>
        <begin position="1"/>
        <end position="87"/>
    </location>
</feature>
<gene>
    <name evidence="1" type="primary">rpsQ</name>
    <name type="ordered locus">PAM_209</name>
</gene>
<sequence length="87" mass="10253">MQRNFRKTFVGKVVSDKMDKTITVIVDIYKKDPLYGKRVKQSKKFHVHDENQEAKPGDLVNFMETRPLSKTKRFRLFKILSHAKSAK</sequence>
<evidence type="ECO:0000255" key="1">
    <source>
        <dbReference type="HAMAP-Rule" id="MF_01345"/>
    </source>
</evidence>
<evidence type="ECO:0000305" key="2"/>
<name>RS17_ONYPE</name>
<organism>
    <name type="scientific">Onion yellows phytoplasma (strain OY-M)</name>
    <dbReference type="NCBI Taxonomy" id="262768"/>
    <lineage>
        <taxon>Bacteria</taxon>
        <taxon>Bacillati</taxon>
        <taxon>Mycoplasmatota</taxon>
        <taxon>Mollicutes</taxon>
        <taxon>Acholeplasmatales</taxon>
        <taxon>Acholeplasmataceae</taxon>
        <taxon>Candidatus Phytoplasma</taxon>
        <taxon>16SrI (Aster yellows group)</taxon>
    </lineage>
</organism>
<comment type="function">
    <text evidence="1">One of the primary rRNA binding proteins, it binds specifically to the 5'-end of 16S ribosomal RNA.</text>
</comment>
<comment type="subunit">
    <text evidence="1">Part of the 30S ribosomal subunit.</text>
</comment>
<comment type="similarity">
    <text evidence="1">Belongs to the universal ribosomal protein uS17 family.</text>
</comment>
<accession>Q6YR12</accession>
<dbReference type="EMBL" id="AP006628">
    <property type="protein sequence ID" value="BAD04294.1"/>
    <property type="molecule type" value="Genomic_DNA"/>
</dbReference>
<dbReference type="SMR" id="Q6YR12"/>
<dbReference type="STRING" id="262768.PAM_209"/>
<dbReference type="KEGG" id="poy:PAM_209"/>
<dbReference type="eggNOG" id="COG0186">
    <property type="taxonomic scope" value="Bacteria"/>
</dbReference>
<dbReference type="HOGENOM" id="CLU_073626_1_0_14"/>
<dbReference type="BioCyc" id="OYEL262768:G1G26-255-MONOMER"/>
<dbReference type="Proteomes" id="UP000002523">
    <property type="component" value="Chromosome"/>
</dbReference>
<dbReference type="GO" id="GO:0022627">
    <property type="term" value="C:cytosolic small ribosomal subunit"/>
    <property type="evidence" value="ECO:0007669"/>
    <property type="project" value="TreeGrafter"/>
</dbReference>
<dbReference type="GO" id="GO:0019843">
    <property type="term" value="F:rRNA binding"/>
    <property type="evidence" value="ECO:0007669"/>
    <property type="project" value="UniProtKB-UniRule"/>
</dbReference>
<dbReference type="GO" id="GO:0003735">
    <property type="term" value="F:structural constituent of ribosome"/>
    <property type="evidence" value="ECO:0007669"/>
    <property type="project" value="InterPro"/>
</dbReference>
<dbReference type="GO" id="GO:0006412">
    <property type="term" value="P:translation"/>
    <property type="evidence" value="ECO:0007669"/>
    <property type="project" value="UniProtKB-UniRule"/>
</dbReference>
<dbReference type="CDD" id="cd00364">
    <property type="entry name" value="Ribosomal_uS17"/>
    <property type="match status" value="1"/>
</dbReference>
<dbReference type="Gene3D" id="2.40.50.140">
    <property type="entry name" value="Nucleic acid-binding proteins"/>
    <property type="match status" value="1"/>
</dbReference>
<dbReference type="HAMAP" id="MF_01345_B">
    <property type="entry name" value="Ribosomal_uS17_B"/>
    <property type="match status" value="1"/>
</dbReference>
<dbReference type="InterPro" id="IPR012340">
    <property type="entry name" value="NA-bd_OB-fold"/>
</dbReference>
<dbReference type="InterPro" id="IPR000266">
    <property type="entry name" value="Ribosomal_uS17"/>
</dbReference>
<dbReference type="InterPro" id="IPR019984">
    <property type="entry name" value="Ribosomal_uS17_bact/chlr"/>
</dbReference>
<dbReference type="NCBIfam" id="NF004123">
    <property type="entry name" value="PRK05610.1"/>
    <property type="match status" value="1"/>
</dbReference>
<dbReference type="NCBIfam" id="TIGR03635">
    <property type="entry name" value="uS17_bact"/>
    <property type="match status" value="1"/>
</dbReference>
<dbReference type="PANTHER" id="PTHR10744">
    <property type="entry name" value="40S RIBOSOMAL PROTEIN S11 FAMILY MEMBER"/>
    <property type="match status" value="1"/>
</dbReference>
<dbReference type="PANTHER" id="PTHR10744:SF1">
    <property type="entry name" value="SMALL RIBOSOMAL SUBUNIT PROTEIN US17M"/>
    <property type="match status" value="1"/>
</dbReference>
<dbReference type="Pfam" id="PF00366">
    <property type="entry name" value="Ribosomal_S17"/>
    <property type="match status" value="1"/>
</dbReference>
<dbReference type="PRINTS" id="PR00973">
    <property type="entry name" value="RIBOSOMALS17"/>
</dbReference>
<dbReference type="SUPFAM" id="SSF50249">
    <property type="entry name" value="Nucleic acid-binding proteins"/>
    <property type="match status" value="1"/>
</dbReference>
<keyword id="KW-0687">Ribonucleoprotein</keyword>
<keyword id="KW-0689">Ribosomal protein</keyword>
<keyword id="KW-0694">RNA-binding</keyword>
<keyword id="KW-0699">rRNA-binding</keyword>
<proteinExistence type="inferred from homology"/>
<protein>
    <recommendedName>
        <fullName evidence="1">Small ribosomal subunit protein uS17</fullName>
    </recommendedName>
    <alternativeName>
        <fullName evidence="2">30S ribosomal protein S17</fullName>
    </alternativeName>
</protein>
<reference key="1">
    <citation type="journal article" date="2004" name="Nat. Genet.">
        <title>Reductive evolution suggested from the complete genome sequence of a plant-pathogenic phytoplasma.</title>
        <authorList>
            <person name="Oshima K."/>
            <person name="Kakizawa S."/>
            <person name="Nishigawa H."/>
            <person name="Jung H.-Y."/>
            <person name="Wei W."/>
            <person name="Suzuki S."/>
            <person name="Arashida R."/>
            <person name="Nakata D."/>
            <person name="Miyata S."/>
            <person name="Ugaki M."/>
            <person name="Namba S."/>
        </authorList>
    </citation>
    <scope>NUCLEOTIDE SEQUENCE [LARGE SCALE GENOMIC DNA]</scope>
    <source>
        <strain>OY-M</strain>
    </source>
</reference>